<accession>O44783</accession>
<accession>A4V1F3</accession>
<accession>Q6AWR4</accession>
<accession>Q9VZP7</accession>
<gene>
    <name type="primary">sty</name>
    <name type="ORF">CG1921</name>
</gene>
<sequence length="589" mass="62389">MDRRNGGDPLAPPRPPKLLPRVHRPRAPEPTLSGVDHNAGATASALASGASSAAPVAIHNNNSQQQLSISAAASNNNTISIIPASPDFDDYQIHHLTFLPQRPSSLSRNSSTASSTTATGISVSGSGSVSGSSSSFTRRRPPAPVPLNNSISNNNNNSINNNFLSHFQSAEPASNALGQPPASPVTLAQPRPESERLTNEYVDTPLQHATRSQHPAGQQDNGQTTTHHLLLLPQRNQHLHLQQHQQHLQQQQQQQQQQQQQQHLQHQQNQQHARLATTTQATSVGSDHTDGLLHSHLQNSTTKPPASKQPAPPRLGMGLGLGLGLGLNQPIITKQPTPATQKERMHALEELLQPGGAGGNGGPLVMAGDPSLLNPIVCPRCGRCRCEQCQSPRPLPQTWVCNKTCLCSAESVIDYASCLCCAKALFYHCARDNDLDCDDGNGTPCVDNPCSCGPYKRTQRWGWLGALSIFLPCLWFYWPMRGCMKLCEKCYGRFAGRGCRCQGIGGGGAGSGGGVGSIGSTSSMLPIVPLGVNGSGLGGGVSLSGGVTDGGLNQANGKAMDHGCSAARSILRKGDLTPEKRLLDSSPDY</sequence>
<name>SPY_DROME</name>
<feature type="chain" id="PRO_0000076897" description="Protein sprouty">
    <location>
        <begin position="1"/>
        <end position="589"/>
    </location>
</feature>
<feature type="domain" description="SPR" evidence="1">
    <location>
        <begin position="380"/>
        <end position="499"/>
    </location>
</feature>
<feature type="region of interest" description="Disordered" evidence="2">
    <location>
        <begin position="1"/>
        <end position="37"/>
    </location>
</feature>
<feature type="region of interest" description="Disordered" evidence="2">
    <location>
        <begin position="102"/>
        <end position="194"/>
    </location>
</feature>
<feature type="region of interest" description="Disordered" evidence="2">
    <location>
        <begin position="239"/>
        <end position="320"/>
    </location>
</feature>
<feature type="compositionally biased region" description="Low complexity" evidence="2">
    <location>
        <begin position="104"/>
        <end position="135"/>
    </location>
</feature>
<feature type="compositionally biased region" description="Low complexity" evidence="2">
    <location>
        <begin position="148"/>
        <end position="162"/>
    </location>
</feature>
<feature type="compositionally biased region" description="Polar residues" evidence="2">
    <location>
        <begin position="163"/>
        <end position="172"/>
    </location>
</feature>
<feature type="compositionally biased region" description="Low complexity" evidence="2">
    <location>
        <begin position="239"/>
        <end position="272"/>
    </location>
</feature>
<feature type="compositionally biased region" description="Polar residues" evidence="2">
    <location>
        <begin position="276"/>
        <end position="286"/>
    </location>
</feature>
<feature type="sequence conflict" description="In Ref. 1; AAC04257." evidence="7" ref="1">
    <original>N</original>
    <variation>T</variation>
    <location>
        <position position="38"/>
    </location>
</feature>
<feature type="sequence conflict" description="In Ref. 4; AAT94413." evidence="7" ref="4">
    <original>L</original>
    <variation>M</variation>
    <location>
        <position position="241"/>
    </location>
</feature>
<feature type="sequence conflict" description="In Ref. 1; AAC04257." evidence="7" ref="1">
    <original>Q</original>
    <variation>QQQ</variation>
    <location>
        <position position="262"/>
    </location>
</feature>
<feature type="sequence conflict" description="In Ref. 1; AAC04257." evidence="7" ref="1">
    <original>P</original>
    <variation>L</variation>
    <location>
        <position position="312"/>
    </location>
</feature>
<feature type="sequence conflict" description="In Ref. 4; AAT94413." evidence="7" ref="4">
    <original>M</original>
    <variation>R</variation>
    <location>
        <position position="345"/>
    </location>
</feature>
<proteinExistence type="evidence at protein level"/>
<protein>
    <recommendedName>
        <fullName>Protein sprouty</fullName>
        <shortName>Spry</shortName>
    </recommendedName>
</protein>
<reference key="1">
    <citation type="journal article" date="1998" name="Cell">
        <title>Sprouty encodes a novel antagonist of FGF signaling that patterns apical branching of the Drosophila airways.</title>
        <authorList>
            <person name="Hacohen N."/>
            <person name="Kramer S."/>
            <person name="Sutherland D."/>
            <person name="Hiromi Y."/>
            <person name="Krasnow M.A."/>
        </authorList>
    </citation>
    <scope>NUCLEOTIDE SEQUENCE [MRNA]</scope>
    <scope>FUNCTION</scope>
    <scope>SUBCELLULAR LOCATION</scope>
    <scope>TISSUE SPECIFICITY</scope>
    <scope>INDUCTION</scope>
    <scope>DISRUPTION PHENOTYPE</scope>
    <source>
        <strain>Canton-S</strain>
    </source>
</reference>
<reference key="2">
    <citation type="journal article" date="2000" name="Science">
        <title>The genome sequence of Drosophila melanogaster.</title>
        <authorList>
            <person name="Adams M.D."/>
            <person name="Celniker S.E."/>
            <person name="Holt R.A."/>
            <person name="Evans C.A."/>
            <person name="Gocayne J.D."/>
            <person name="Amanatides P.G."/>
            <person name="Scherer S.E."/>
            <person name="Li P.W."/>
            <person name="Hoskins R.A."/>
            <person name="Galle R.F."/>
            <person name="George R.A."/>
            <person name="Lewis S.E."/>
            <person name="Richards S."/>
            <person name="Ashburner M."/>
            <person name="Henderson S.N."/>
            <person name="Sutton G.G."/>
            <person name="Wortman J.R."/>
            <person name="Yandell M.D."/>
            <person name="Zhang Q."/>
            <person name="Chen L.X."/>
            <person name="Brandon R.C."/>
            <person name="Rogers Y.-H.C."/>
            <person name="Blazej R.G."/>
            <person name="Champe M."/>
            <person name="Pfeiffer B.D."/>
            <person name="Wan K.H."/>
            <person name="Doyle C."/>
            <person name="Baxter E.G."/>
            <person name="Helt G."/>
            <person name="Nelson C.R."/>
            <person name="Miklos G.L.G."/>
            <person name="Abril J.F."/>
            <person name="Agbayani A."/>
            <person name="An H.-J."/>
            <person name="Andrews-Pfannkoch C."/>
            <person name="Baldwin D."/>
            <person name="Ballew R.M."/>
            <person name="Basu A."/>
            <person name="Baxendale J."/>
            <person name="Bayraktaroglu L."/>
            <person name="Beasley E.M."/>
            <person name="Beeson K.Y."/>
            <person name="Benos P.V."/>
            <person name="Berman B.P."/>
            <person name="Bhandari D."/>
            <person name="Bolshakov S."/>
            <person name="Borkova D."/>
            <person name="Botchan M.R."/>
            <person name="Bouck J."/>
            <person name="Brokstein P."/>
            <person name="Brottier P."/>
            <person name="Burtis K.C."/>
            <person name="Busam D.A."/>
            <person name="Butler H."/>
            <person name="Cadieu E."/>
            <person name="Center A."/>
            <person name="Chandra I."/>
            <person name="Cherry J.M."/>
            <person name="Cawley S."/>
            <person name="Dahlke C."/>
            <person name="Davenport L.B."/>
            <person name="Davies P."/>
            <person name="de Pablos B."/>
            <person name="Delcher A."/>
            <person name="Deng Z."/>
            <person name="Mays A.D."/>
            <person name="Dew I."/>
            <person name="Dietz S.M."/>
            <person name="Dodson K."/>
            <person name="Doup L.E."/>
            <person name="Downes M."/>
            <person name="Dugan-Rocha S."/>
            <person name="Dunkov B.C."/>
            <person name="Dunn P."/>
            <person name="Durbin K.J."/>
            <person name="Evangelista C.C."/>
            <person name="Ferraz C."/>
            <person name="Ferriera S."/>
            <person name="Fleischmann W."/>
            <person name="Fosler C."/>
            <person name="Gabrielian A.E."/>
            <person name="Garg N.S."/>
            <person name="Gelbart W.M."/>
            <person name="Glasser K."/>
            <person name="Glodek A."/>
            <person name="Gong F."/>
            <person name="Gorrell J.H."/>
            <person name="Gu Z."/>
            <person name="Guan P."/>
            <person name="Harris M."/>
            <person name="Harris N.L."/>
            <person name="Harvey D.A."/>
            <person name="Heiman T.J."/>
            <person name="Hernandez J.R."/>
            <person name="Houck J."/>
            <person name="Hostin D."/>
            <person name="Houston K.A."/>
            <person name="Howland T.J."/>
            <person name="Wei M.-H."/>
            <person name="Ibegwam C."/>
            <person name="Jalali M."/>
            <person name="Kalush F."/>
            <person name="Karpen G.H."/>
            <person name="Ke Z."/>
            <person name="Kennison J.A."/>
            <person name="Ketchum K.A."/>
            <person name="Kimmel B.E."/>
            <person name="Kodira C.D."/>
            <person name="Kraft C.L."/>
            <person name="Kravitz S."/>
            <person name="Kulp D."/>
            <person name="Lai Z."/>
            <person name="Lasko P."/>
            <person name="Lei Y."/>
            <person name="Levitsky A.A."/>
            <person name="Li J.H."/>
            <person name="Li Z."/>
            <person name="Liang Y."/>
            <person name="Lin X."/>
            <person name="Liu X."/>
            <person name="Mattei B."/>
            <person name="McIntosh T.C."/>
            <person name="McLeod M.P."/>
            <person name="McPherson D."/>
            <person name="Merkulov G."/>
            <person name="Milshina N.V."/>
            <person name="Mobarry C."/>
            <person name="Morris J."/>
            <person name="Moshrefi A."/>
            <person name="Mount S.M."/>
            <person name="Moy M."/>
            <person name="Murphy B."/>
            <person name="Murphy L."/>
            <person name="Muzny D.M."/>
            <person name="Nelson D.L."/>
            <person name="Nelson D.R."/>
            <person name="Nelson K.A."/>
            <person name="Nixon K."/>
            <person name="Nusskern D.R."/>
            <person name="Pacleb J.M."/>
            <person name="Palazzolo M."/>
            <person name="Pittman G.S."/>
            <person name="Pan S."/>
            <person name="Pollard J."/>
            <person name="Puri V."/>
            <person name="Reese M.G."/>
            <person name="Reinert K."/>
            <person name="Remington K."/>
            <person name="Saunders R.D.C."/>
            <person name="Scheeler F."/>
            <person name="Shen H."/>
            <person name="Shue B.C."/>
            <person name="Siden-Kiamos I."/>
            <person name="Simpson M."/>
            <person name="Skupski M.P."/>
            <person name="Smith T.J."/>
            <person name="Spier E."/>
            <person name="Spradling A.C."/>
            <person name="Stapleton M."/>
            <person name="Strong R."/>
            <person name="Sun E."/>
            <person name="Svirskas R."/>
            <person name="Tector C."/>
            <person name="Turner R."/>
            <person name="Venter E."/>
            <person name="Wang A.H."/>
            <person name="Wang X."/>
            <person name="Wang Z.-Y."/>
            <person name="Wassarman D.A."/>
            <person name="Weinstock G.M."/>
            <person name="Weissenbach J."/>
            <person name="Williams S.M."/>
            <person name="Woodage T."/>
            <person name="Worley K.C."/>
            <person name="Wu D."/>
            <person name="Yang S."/>
            <person name="Yao Q.A."/>
            <person name="Ye J."/>
            <person name="Yeh R.-F."/>
            <person name="Zaveri J.S."/>
            <person name="Zhan M."/>
            <person name="Zhang G."/>
            <person name="Zhao Q."/>
            <person name="Zheng L."/>
            <person name="Zheng X.H."/>
            <person name="Zhong F.N."/>
            <person name="Zhong W."/>
            <person name="Zhou X."/>
            <person name="Zhu S.C."/>
            <person name="Zhu X."/>
            <person name="Smith H.O."/>
            <person name="Gibbs R.A."/>
            <person name="Myers E.W."/>
            <person name="Rubin G.M."/>
            <person name="Venter J.C."/>
        </authorList>
    </citation>
    <scope>NUCLEOTIDE SEQUENCE [LARGE SCALE GENOMIC DNA]</scope>
    <source>
        <strain>Berkeley</strain>
    </source>
</reference>
<reference key="3">
    <citation type="journal article" date="2002" name="Genome Biol.">
        <title>Annotation of the Drosophila melanogaster euchromatic genome: a systematic review.</title>
        <authorList>
            <person name="Misra S."/>
            <person name="Crosby M.A."/>
            <person name="Mungall C.J."/>
            <person name="Matthews B.B."/>
            <person name="Campbell K.S."/>
            <person name="Hradecky P."/>
            <person name="Huang Y."/>
            <person name="Kaminker J.S."/>
            <person name="Millburn G.H."/>
            <person name="Prochnik S.E."/>
            <person name="Smith C.D."/>
            <person name="Tupy J.L."/>
            <person name="Whitfield E.J."/>
            <person name="Bayraktaroglu L."/>
            <person name="Berman B.P."/>
            <person name="Bettencourt B.R."/>
            <person name="Celniker S.E."/>
            <person name="de Grey A.D.N.J."/>
            <person name="Drysdale R.A."/>
            <person name="Harris N.L."/>
            <person name="Richter J."/>
            <person name="Russo S."/>
            <person name="Schroeder A.J."/>
            <person name="Shu S.Q."/>
            <person name="Stapleton M."/>
            <person name="Yamada C."/>
            <person name="Ashburner M."/>
            <person name="Gelbart W.M."/>
            <person name="Rubin G.M."/>
            <person name="Lewis S.E."/>
        </authorList>
    </citation>
    <scope>GENOME REANNOTATION</scope>
    <source>
        <strain>Berkeley</strain>
    </source>
</reference>
<reference key="4">
    <citation type="submission" date="2004-08" db="EMBL/GenBank/DDBJ databases">
        <authorList>
            <person name="Stapleton M."/>
            <person name="Carlson J.W."/>
            <person name="Chavez C."/>
            <person name="Frise E."/>
            <person name="George R.A."/>
            <person name="Pacleb J.M."/>
            <person name="Park S."/>
            <person name="Wan K.H."/>
            <person name="Yu C."/>
            <person name="Rubin G.M."/>
            <person name="Celniker S.E."/>
        </authorList>
    </citation>
    <scope>NUCLEOTIDE SEQUENCE [LARGE SCALE MRNA]</scope>
    <source>
        <strain>Berkeley</strain>
        <tissue>Head</tissue>
    </source>
</reference>
<reference key="5">
    <citation type="journal article" date="1999" name="Cell">
        <title>Sprouty, an intracellular inhibitor of Ras signaling.</title>
        <authorList>
            <person name="Casci T."/>
            <person name="Vinos J."/>
            <person name="Freeman M."/>
        </authorList>
    </citation>
    <scope>FUNCTION</scope>
    <scope>INTERACTION WITH DRK AND RASGAP1</scope>
    <scope>SUBCELLULAR LOCATION</scope>
</reference>
<reference key="6">
    <citation type="journal article" date="1999" name="Development">
        <title>Sprouty: a common antagonist of FGF and EGF signaling pathways in Drosophila.</title>
        <authorList>
            <person name="Kramer S."/>
            <person name="Okabe M."/>
            <person name="Hacohen N."/>
            <person name="Krasnow M.A."/>
            <person name="Hiromi Y."/>
        </authorList>
    </citation>
    <scope>FUNCTION</scope>
    <scope>TISSUE SPECIFICITY</scope>
</reference>
<reference key="7">
    <citation type="journal article" date="1999" name="Development">
        <title>Sprouty is a general inhibitor of receptor tyrosine kinase signaling.</title>
        <authorList>
            <person name="Reich A."/>
            <person name="Sapir A."/>
            <person name="Shilo B.-Z."/>
        </authorList>
    </citation>
    <scope>FUNCTION</scope>
    <scope>TISSUE SPECIFICITY</scope>
    <scope>INDUCTION</scope>
</reference>
<evidence type="ECO:0000255" key="1">
    <source>
        <dbReference type="PROSITE-ProRule" id="PRU00572"/>
    </source>
</evidence>
<evidence type="ECO:0000256" key="2">
    <source>
        <dbReference type="SAM" id="MobiDB-lite"/>
    </source>
</evidence>
<evidence type="ECO:0000269" key="3">
    <source>
    </source>
</evidence>
<evidence type="ECO:0000269" key="4">
    <source>
    </source>
</evidence>
<evidence type="ECO:0000269" key="5">
    <source>
    </source>
</evidence>
<evidence type="ECO:0000269" key="6">
    <source>
    </source>
</evidence>
<evidence type="ECO:0000305" key="7"/>
<dbReference type="EMBL" id="AF039842">
    <property type="protein sequence ID" value="AAC04257.1"/>
    <property type="molecule type" value="mRNA"/>
</dbReference>
<dbReference type="EMBL" id="AE014296">
    <property type="protein sequence ID" value="AAF47772.1"/>
    <property type="molecule type" value="Genomic_DNA"/>
</dbReference>
<dbReference type="EMBL" id="AE014296">
    <property type="protein sequence ID" value="AAN11566.1"/>
    <property type="molecule type" value="Genomic_DNA"/>
</dbReference>
<dbReference type="EMBL" id="BT015184">
    <property type="protein sequence ID" value="AAT94413.1"/>
    <property type="molecule type" value="mRNA"/>
</dbReference>
<dbReference type="RefSeq" id="NP_523902.2">
    <property type="nucleotide sequence ID" value="NM_079178.3"/>
</dbReference>
<dbReference type="RefSeq" id="NP_728881.1">
    <property type="nucleotide sequence ID" value="NM_168031.2"/>
</dbReference>
<dbReference type="BioGRID" id="63919">
    <property type="interactions" value="104"/>
</dbReference>
<dbReference type="DIP" id="DIP-17914N"/>
<dbReference type="FunCoup" id="O44783">
    <property type="interactions" value="100"/>
</dbReference>
<dbReference type="IntAct" id="O44783">
    <property type="interactions" value="22"/>
</dbReference>
<dbReference type="STRING" id="7227.FBpp0073004"/>
<dbReference type="PaxDb" id="7227-FBpp0073004"/>
<dbReference type="EnsemblMetazoa" id="FBtr0073145">
    <property type="protein sequence ID" value="FBpp0073004"/>
    <property type="gene ID" value="FBgn0014388"/>
</dbReference>
<dbReference type="EnsemblMetazoa" id="FBtr0073146">
    <property type="protein sequence ID" value="FBpp0073005"/>
    <property type="gene ID" value="FBgn0014388"/>
</dbReference>
<dbReference type="GeneID" id="38424"/>
<dbReference type="KEGG" id="dme:Dmel_CG1921"/>
<dbReference type="AGR" id="FB:FBgn0014388"/>
<dbReference type="CTD" id="20914"/>
<dbReference type="FlyBase" id="FBgn0014388">
    <property type="gene designation" value="sty"/>
</dbReference>
<dbReference type="VEuPathDB" id="VectorBase:FBgn0014388"/>
<dbReference type="eggNOG" id="ENOG502QTG8">
    <property type="taxonomic scope" value="Eukaryota"/>
</dbReference>
<dbReference type="HOGENOM" id="CLU_458038_0_0_1"/>
<dbReference type="InParanoid" id="O44783"/>
<dbReference type="OMA" id="ADFDDYQ"/>
<dbReference type="OrthoDB" id="10038884at2759"/>
<dbReference type="PhylomeDB" id="O44783"/>
<dbReference type="Reactome" id="R-DME-1295596">
    <property type="pathway name" value="Spry regulation of FGF signaling"/>
</dbReference>
<dbReference type="Reactome" id="R-DME-182971">
    <property type="pathway name" value="EGFR downregulation"/>
</dbReference>
<dbReference type="SignaLink" id="O44783"/>
<dbReference type="BioGRID-ORCS" id="38424">
    <property type="hits" value="0 hits in 3 CRISPR screens"/>
</dbReference>
<dbReference type="ChiTaRS" id="sty">
    <property type="organism name" value="fly"/>
</dbReference>
<dbReference type="GenomeRNAi" id="38424"/>
<dbReference type="PRO" id="PR:O44783"/>
<dbReference type="Proteomes" id="UP000000803">
    <property type="component" value="Chromosome 3L"/>
</dbReference>
<dbReference type="Bgee" id="FBgn0014388">
    <property type="expression patterns" value="Expressed in hemocyte (sensu Nematoda and Protostomia) in insect leg and 265 other cell types or tissues"/>
</dbReference>
<dbReference type="ExpressionAtlas" id="O44783">
    <property type="expression patterns" value="baseline and differential"/>
</dbReference>
<dbReference type="GO" id="GO:0045177">
    <property type="term" value="C:apical part of cell"/>
    <property type="evidence" value="ECO:0000314"/>
    <property type="project" value="FlyBase"/>
</dbReference>
<dbReference type="GO" id="GO:0009898">
    <property type="term" value="C:cytoplasmic side of plasma membrane"/>
    <property type="evidence" value="ECO:0000314"/>
    <property type="project" value="FlyBase"/>
</dbReference>
<dbReference type="GO" id="GO:0005829">
    <property type="term" value="C:cytosol"/>
    <property type="evidence" value="ECO:0000318"/>
    <property type="project" value="GO_Central"/>
</dbReference>
<dbReference type="GO" id="GO:0005886">
    <property type="term" value="C:plasma membrane"/>
    <property type="evidence" value="ECO:0000314"/>
    <property type="project" value="UniProtKB"/>
</dbReference>
<dbReference type="GO" id="GO:0048513">
    <property type="term" value="P:animal organ development"/>
    <property type="evidence" value="ECO:0000318"/>
    <property type="project" value="GO_Central"/>
</dbReference>
<dbReference type="GO" id="GO:0060446">
    <property type="term" value="P:branching involved in open tracheal system development"/>
    <property type="evidence" value="ECO:0000315"/>
    <property type="project" value="UniProtKB"/>
</dbReference>
<dbReference type="GO" id="GO:0001745">
    <property type="term" value="P:compound eye morphogenesis"/>
    <property type="evidence" value="ECO:0000315"/>
    <property type="project" value="FlyBase"/>
</dbReference>
<dbReference type="GO" id="GO:0008069">
    <property type="term" value="P:dorsal/ventral axis specification, ovarian follicular epithelium"/>
    <property type="evidence" value="ECO:0000315"/>
    <property type="project" value="FlyBase"/>
</dbReference>
<dbReference type="GO" id="GO:0021782">
    <property type="term" value="P:glial cell development"/>
    <property type="evidence" value="ECO:0000315"/>
    <property type="project" value="FlyBase"/>
</dbReference>
<dbReference type="GO" id="GO:0035171">
    <property type="term" value="P:lamellocyte differentiation"/>
    <property type="evidence" value="ECO:0000315"/>
    <property type="project" value="FlyBase"/>
</dbReference>
<dbReference type="GO" id="GO:0055001">
    <property type="term" value="P:muscle cell development"/>
    <property type="evidence" value="ECO:0000315"/>
    <property type="project" value="FlyBase"/>
</dbReference>
<dbReference type="GO" id="GO:0042059">
    <property type="term" value="P:negative regulation of epidermal growth factor receptor signaling pathway"/>
    <property type="evidence" value="ECO:0000315"/>
    <property type="project" value="FlyBase"/>
</dbReference>
<dbReference type="GO" id="GO:0070373">
    <property type="term" value="P:negative regulation of ERK1 and ERK2 cascade"/>
    <property type="evidence" value="ECO:0000315"/>
    <property type="project" value="FlyBase"/>
</dbReference>
<dbReference type="GO" id="GO:0040037">
    <property type="term" value="P:negative regulation of fibroblast growth factor receptor signaling pathway"/>
    <property type="evidence" value="ECO:0000315"/>
    <property type="project" value="UniProtKB"/>
</dbReference>
<dbReference type="GO" id="GO:0110109">
    <property type="term" value="P:negative regulation of imaginal disc-derived wing vein specification"/>
    <property type="evidence" value="ECO:0000315"/>
    <property type="project" value="FlyBase"/>
</dbReference>
<dbReference type="GO" id="GO:0046533">
    <property type="term" value="P:negative regulation of photoreceptor cell differentiation"/>
    <property type="evidence" value="ECO:0000315"/>
    <property type="project" value="FlyBase"/>
</dbReference>
<dbReference type="GO" id="GO:0046580">
    <property type="term" value="P:negative regulation of Ras protein signal transduction"/>
    <property type="evidence" value="ECO:0000318"/>
    <property type="project" value="GO_Central"/>
</dbReference>
<dbReference type="GO" id="GO:0120177">
    <property type="term" value="P:negative regulation of torso signaling pathway"/>
    <property type="evidence" value="ECO:0000316"/>
    <property type="project" value="FlyBase"/>
</dbReference>
<dbReference type="GO" id="GO:0016318">
    <property type="term" value="P:ommatidial rotation"/>
    <property type="evidence" value="ECO:0000315"/>
    <property type="project" value="FlyBase"/>
</dbReference>
<dbReference type="GO" id="GO:0007424">
    <property type="term" value="P:open tracheal system development"/>
    <property type="evidence" value="ECO:0000315"/>
    <property type="project" value="FlyBase"/>
</dbReference>
<dbReference type="GO" id="GO:0045314">
    <property type="term" value="P:regulation of compound eye photoreceptor development"/>
    <property type="evidence" value="ECO:0000316"/>
    <property type="project" value="FlyBase"/>
</dbReference>
<dbReference type="GO" id="GO:0001666">
    <property type="term" value="P:response to hypoxia"/>
    <property type="evidence" value="ECO:0000315"/>
    <property type="project" value="FlyBase"/>
</dbReference>
<dbReference type="InterPro" id="IPR007875">
    <property type="entry name" value="Sprouty"/>
</dbReference>
<dbReference type="InterPro" id="IPR051192">
    <property type="entry name" value="Sprouty_domain"/>
</dbReference>
<dbReference type="PANTHER" id="PTHR12365:SF7">
    <property type="entry name" value="PROTEIN SPROUTY"/>
    <property type="match status" value="1"/>
</dbReference>
<dbReference type="PANTHER" id="PTHR12365">
    <property type="entry name" value="SPROUTY"/>
    <property type="match status" value="1"/>
</dbReference>
<dbReference type="Pfam" id="PF05210">
    <property type="entry name" value="Sprouty"/>
    <property type="match status" value="1"/>
</dbReference>
<dbReference type="PROSITE" id="PS51227">
    <property type="entry name" value="SPR"/>
    <property type="match status" value="1"/>
</dbReference>
<keyword id="KW-1003">Cell membrane</keyword>
<keyword id="KW-0217">Developmental protein</keyword>
<keyword id="KW-0472">Membrane</keyword>
<keyword id="KW-1185">Reference proteome</keyword>
<comment type="function">
    <text evidence="3 4 5 6">Inhibitor of tracheal branching that restricts branch budding by antagonizing the BNL-FGF pathway (BNL: branchless, an fgf inducer of branching). Acts as an antagonist of EGFR-mediated signaling in the eye (where it is important for cell determination) midline glia, chordotonal organs, wing and ovarian follicle cells.</text>
</comment>
<comment type="subunit">
    <text evidence="3">Interacts with DRK and RasGAP1 proteins of the Ras pathway.</text>
</comment>
<comment type="subcellular location">
    <subcellularLocation>
        <location evidence="3 6">Cell membrane</location>
        <topology evidence="3 6">Peripheral membrane protein</topology>
        <orientation evidence="3 6">Cytoplasmic side</orientation>
    </subcellularLocation>
</comment>
<comment type="tissue specificity">
    <text evidence="4 5 6">In ovary, expressed from stage 7 of oogenesis in the posterior follicle cells and during stage 9 when the follicle cells migrate posteriorly over the oocyte nucleus, expression is seen in the dorsal and lateral cells and is excluded from the ventral cells. Once the migration of follicle cells is complete expressed in the dorsal-anterior corner of the egg chamber. Expressed in the embryonic tracheal system, developing eye imaginal disk, embryonic chordotonal organ precursors, midline glia and wing imaginal disk.</text>
</comment>
<comment type="induction">
    <text evidence="5 6">By the BNL-FGF pathway in the tracheal system and by the egf receptor pathway in the wing imaginal disk and the follicle cells of the ovary.</text>
</comment>
<comment type="domain">
    <text>The Cys-rich domain is responsible for the localization of the protein to the plasma membrane.</text>
</comment>
<comment type="disruption phenotype">
    <text evidence="6">Pupal lethal. Mutant embryos and larvae show ectopic tracheal branching.</text>
</comment>
<comment type="similarity">
    <text evidence="7">Belongs to the sprouty family.</text>
</comment>
<organism>
    <name type="scientific">Drosophila melanogaster</name>
    <name type="common">Fruit fly</name>
    <dbReference type="NCBI Taxonomy" id="7227"/>
    <lineage>
        <taxon>Eukaryota</taxon>
        <taxon>Metazoa</taxon>
        <taxon>Ecdysozoa</taxon>
        <taxon>Arthropoda</taxon>
        <taxon>Hexapoda</taxon>
        <taxon>Insecta</taxon>
        <taxon>Pterygota</taxon>
        <taxon>Neoptera</taxon>
        <taxon>Endopterygota</taxon>
        <taxon>Diptera</taxon>
        <taxon>Brachycera</taxon>
        <taxon>Muscomorpha</taxon>
        <taxon>Ephydroidea</taxon>
        <taxon>Drosophilidae</taxon>
        <taxon>Drosophila</taxon>
        <taxon>Sophophora</taxon>
    </lineage>
</organism>